<feature type="chain" id="PRO_0000230391" description="Small ribosomal subunit protein uS11">
    <location>
        <begin position="1"/>
        <end position="133"/>
    </location>
</feature>
<proteinExistence type="inferred from homology"/>
<organism>
    <name type="scientific">Burkholderia lata (strain ATCC 17760 / DSM 23089 / LMG 22485 / NCIMB 9086 / R18194 / 383)</name>
    <dbReference type="NCBI Taxonomy" id="482957"/>
    <lineage>
        <taxon>Bacteria</taxon>
        <taxon>Pseudomonadati</taxon>
        <taxon>Pseudomonadota</taxon>
        <taxon>Betaproteobacteria</taxon>
        <taxon>Burkholderiales</taxon>
        <taxon>Burkholderiaceae</taxon>
        <taxon>Burkholderia</taxon>
        <taxon>Burkholderia cepacia complex</taxon>
    </lineage>
</organism>
<dbReference type="EMBL" id="CP000151">
    <property type="protein sequence ID" value="ABB07073.1"/>
    <property type="molecule type" value="Genomic_DNA"/>
</dbReference>
<dbReference type="RefSeq" id="WP_004197937.1">
    <property type="nucleotide sequence ID" value="NZ_WNDV01000034.1"/>
</dbReference>
<dbReference type="SMR" id="Q39KE3"/>
<dbReference type="GeneID" id="98107136"/>
<dbReference type="KEGG" id="bur:Bcep18194_A3471"/>
<dbReference type="HOGENOM" id="CLU_072439_5_0_4"/>
<dbReference type="Proteomes" id="UP000002705">
    <property type="component" value="Chromosome 1"/>
</dbReference>
<dbReference type="GO" id="GO:1990904">
    <property type="term" value="C:ribonucleoprotein complex"/>
    <property type="evidence" value="ECO:0007669"/>
    <property type="project" value="UniProtKB-KW"/>
</dbReference>
<dbReference type="GO" id="GO:0005840">
    <property type="term" value="C:ribosome"/>
    <property type="evidence" value="ECO:0007669"/>
    <property type="project" value="UniProtKB-KW"/>
</dbReference>
<dbReference type="GO" id="GO:0019843">
    <property type="term" value="F:rRNA binding"/>
    <property type="evidence" value="ECO:0007669"/>
    <property type="project" value="UniProtKB-UniRule"/>
</dbReference>
<dbReference type="GO" id="GO:0003735">
    <property type="term" value="F:structural constituent of ribosome"/>
    <property type="evidence" value="ECO:0007669"/>
    <property type="project" value="InterPro"/>
</dbReference>
<dbReference type="GO" id="GO:0006412">
    <property type="term" value="P:translation"/>
    <property type="evidence" value="ECO:0007669"/>
    <property type="project" value="UniProtKB-UniRule"/>
</dbReference>
<dbReference type="FunFam" id="3.30.420.80:FF:000001">
    <property type="entry name" value="30S ribosomal protein S11"/>
    <property type="match status" value="1"/>
</dbReference>
<dbReference type="Gene3D" id="3.30.420.80">
    <property type="entry name" value="Ribosomal protein S11"/>
    <property type="match status" value="1"/>
</dbReference>
<dbReference type="HAMAP" id="MF_01310">
    <property type="entry name" value="Ribosomal_uS11"/>
    <property type="match status" value="1"/>
</dbReference>
<dbReference type="InterPro" id="IPR001971">
    <property type="entry name" value="Ribosomal_uS11"/>
</dbReference>
<dbReference type="InterPro" id="IPR019981">
    <property type="entry name" value="Ribosomal_uS11_bac-type"/>
</dbReference>
<dbReference type="InterPro" id="IPR018102">
    <property type="entry name" value="Ribosomal_uS11_CS"/>
</dbReference>
<dbReference type="InterPro" id="IPR036967">
    <property type="entry name" value="Ribosomal_uS11_sf"/>
</dbReference>
<dbReference type="NCBIfam" id="NF003698">
    <property type="entry name" value="PRK05309.1"/>
    <property type="match status" value="1"/>
</dbReference>
<dbReference type="NCBIfam" id="TIGR03632">
    <property type="entry name" value="uS11_bact"/>
    <property type="match status" value="1"/>
</dbReference>
<dbReference type="PANTHER" id="PTHR11759">
    <property type="entry name" value="40S RIBOSOMAL PROTEIN S14/30S RIBOSOMAL PROTEIN S11"/>
    <property type="match status" value="1"/>
</dbReference>
<dbReference type="Pfam" id="PF00411">
    <property type="entry name" value="Ribosomal_S11"/>
    <property type="match status" value="1"/>
</dbReference>
<dbReference type="PIRSF" id="PIRSF002131">
    <property type="entry name" value="Ribosomal_S11"/>
    <property type="match status" value="1"/>
</dbReference>
<dbReference type="SUPFAM" id="SSF53137">
    <property type="entry name" value="Translational machinery components"/>
    <property type="match status" value="1"/>
</dbReference>
<dbReference type="PROSITE" id="PS00054">
    <property type="entry name" value="RIBOSOMAL_S11"/>
    <property type="match status" value="1"/>
</dbReference>
<sequence length="133" mass="14118">MAKASNTAAQRVRKKVKKNVAEGVVHVHASFNNTIITITDRQGNALAWATSGGQGFKGSRKSTPFAAQVAAESAGRVAMEYGVKNLEVRIKGPGPGRESAVRALHGLGIKITAISDVTPIPHNGCRPPKRRRI</sequence>
<name>RS11_BURL3</name>
<reference key="1">
    <citation type="submission" date="2005-10" db="EMBL/GenBank/DDBJ databases">
        <title>Complete sequence of chromosome 1 of Burkholderia sp. 383.</title>
        <authorList>
            <consortium name="US DOE Joint Genome Institute"/>
            <person name="Copeland A."/>
            <person name="Lucas S."/>
            <person name="Lapidus A."/>
            <person name="Barry K."/>
            <person name="Detter J.C."/>
            <person name="Glavina T."/>
            <person name="Hammon N."/>
            <person name="Israni S."/>
            <person name="Pitluck S."/>
            <person name="Chain P."/>
            <person name="Malfatti S."/>
            <person name="Shin M."/>
            <person name="Vergez L."/>
            <person name="Schmutz J."/>
            <person name="Larimer F."/>
            <person name="Land M."/>
            <person name="Kyrpides N."/>
            <person name="Lykidis A."/>
            <person name="Richardson P."/>
        </authorList>
    </citation>
    <scope>NUCLEOTIDE SEQUENCE [LARGE SCALE GENOMIC DNA]</scope>
    <source>
        <strain>ATCC 17760 / DSM 23089 / LMG 22485 / NCIMB 9086 / R18194 / 383</strain>
    </source>
</reference>
<accession>Q39KE3</accession>
<comment type="function">
    <text evidence="1">Located on the platform of the 30S subunit, it bridges several disparate RNA helices of the 16S rRNA. Forms part of the Shine-Dalgarno cleft in the 70S ribosome.</text>
</comment>
<comment type="subunit">
    <text evidence="1">Part of the 30S ribosomal subunit. Interacts with proteins S7 and S18. Binds to IF-3.</text>
</comment>
<comment type="similarity">
    <text evidence="1">Belongs to the universal ribosomal protein uS11 family.</text>
</comment>
<protein>
    <recommendedName>
        <fullName evidence="1">Small ribosomal subunit protein uS11</fullName>
    </recommendedName>
    <alternativeName>
        <fullName evidence="2">30S ribosomal protein S11</fullName>
    </alternativeName>
</protein>
<evidence type="ECO:0000255" key="1">
    <source>
        <dbReference type="HAMAP-Rule" id="MF_01310"/>
    </source>
</evidence>
<evidence type="ECO:0000305" key="2"/>
<keyword id="KW-0687">Ribonucleoprotein</keyword>
<keyword id="KW-0689">Ribosomal protein</keyword>
<keyword id="KW-0694">RNA-binding</keyword>
<keyword id="KW-0699">rRNA-binding</keyword>
<gene>
    <name evidence="1" type="primary">rpsK</name>
    <name type="ordered locus">Bcep18194_A3471</name>
</gene>